<dbReference type="EMBL" id="CP000382">
    <property type="protein sequence ID" value="ABK62505.1"/>
    <property type="molecule type" value="Genomic_DNA"/>
</dbReference>
<dbReference type="RefSeq" id="WP_003364672.1">
    <property type="nucleotide sequence ID" value="NC_008593.1"/>
</dbReference>
<dbReference type="SMR" id="A0Q2Z9"/>
<dbReference type="STRING" id="386415.NT01CX_0535"/>
<dbReference type="GeneID" id="66318971"/>
<dbReference type="KEGG" id="cno:NT01CX_0535"/>
<dbReference type="eggNOG" id="COG0636">
    <property type="taxonomic scope" value="Bacteria"/>
</dbReference>
<dbReference type="HOGENOM" id="CLU_148047_2_0_9"/>
<dbReference type="Proteomes" id="UP000008220">
    <property type="component" value="Chromosome"/>
</dbReference>
<dbReference type="GO" id="GO:0005886">
    <property type="term" value="C:plasma membrane"/>
    <property type="evidence" value="ECO:0007669"/>
    <property type="project" value="UniProtKB-SubCell"/>
</dbReference>
<dbReference type="GO" id="GO:0045259">
    <property type="term" value="C:proton-transporting ATP synthase complex"/>
    <property type="evidence" value="ECO:0007669"/>
    <property type="project" value="UniProtKB-KW"/>
</dbReference>
<dbReference type="GO" id="GO:0033177">
    <property type="term" value="C:proton-transporting two-sector ATPase complex, proton-transporting domain"/>
    <property type="evidence" value="ECO:0007669"/>
    <property type="project" value="InterPro"/>
</dbReference>
<dbReference type="GO" id="GO:0008289">
    <property type="term" value="F:lipid binding"/>
    <property type="evidence" value="ECO:0007669"/>
    <property type="project" value="UniProtKB-KW"/>
</dbReference>
<dbReference type="GO" id="GO:0046933">
    <property type="term" value="F:proton-transporting ATP synthase activity, rotational mechanism"/>
    <property type="evidence" value="ECO:0007669"/>
    <property type="project" value="UniProtKB-UniRule"/>
</dbReference>
<dbReference type="CDD" id="cd18184">
    <property type="entry name" value="ATP-synt_Fo_c_NaATPase"/>
    <property type="match status" value="1"/>
</dbReference>
<dbReference type="FunFam" id="1.20.20.10:FF:000002">
    <property type="entry name" value="ATP synthase subunit c"/>
    <property type="match status" value="1"/>
</dbReference>
<dbReference type="Gene3D" id="1.20.20.10">
    <property type="entry name" value="F1F0 ATP synthase subunit C"/>
    <property type="match status" value="1"/>
</dbReference>
<dbReference type="HAMAP" id="MF_01396">
    <property type="entry name" value="ATP_synth_c_bact"/>
    <property type="match status" value="1"/>
</dbReference>
<dbReference type="InterPro" id="IPR005953">
    <property type="entry name" value="ATP_synth_csu_bac/chlpt"/>
</dbReference>
<dbReference type="InterPro" id="IPR000454">
    <property type="entry name" value="ATP_synth_F0_csu"/>
</dbReference>
<dbReference type="InterPro" id="IPR020537">
    <property type="entry name" value="ATP_synth_F0_csu_DDCD_BS"/>
</dbReference>
<dbReference type="InterPro" id="IPR038662">
    <property type="entry name" value="ATP_synth_F0_csu_sf"/>
</dbReference>
<dbReference type="InterPro" id="IPR002379">
    <property type="entry name" value="ATPase_proteolipid_c-like_dom"/>
</dbReference>
<dbReference type="InterPro" id="IPR035921">
    <property type="entry name" value="F/V-ATP_Csub_sf"/>
</dbReference>
<dbReference type="NCBIfam" id="TIGR01260">
    <property type="entry name" value="ATP_synt_c"/>
    <property type="match status" value="1"/>
</dbReference>
<dbReference type="PANTHER" id="PTHR10031">
    <property type="entry name" value="ATP SYNTHASE LIPID-BINDING PROTEIN, MITOCHONDRIAL"/>
    <property type="match status" value="1"/>
</dbReference>
<dbReference type="PANTHER" id="PTHR10031:SF0">
    <property type="entry name" value="ATPASE PROTEIN 9"/>
    <property type="match status" value="1"/>
</dbReference>
<dbReference type="Pfam" id="PF00137">
    <property type="entry name" value="ATP-synt_C"/>
    <property type="match status" value="1"/>
</dbReference>
<dbReference type="PRINTS" id="PR00124">
    <property type="entry name" value="ATPASEC"/>
</dbReference>
<dbReference type="SUPFAM" id="SSF81333">
    <property type="entry name" value="F1F0 ATP synthase subunit C"/>
    <property type="match status" value="1"/>
</dbReference>
<dbReference type="PROSITE" id="PS00605">
    <property type="entry name" value="ATPASE_C"/>
    <property type="match status" value="1"/>
</dbReference>
<protein>
    <recommendedName>
        <fullName evidence="1">ATP synthase subunit c</fullName>
    </recommendedName>
    <alternativeName>
        <fullName evidence="1">ATP synthase F(0) sector subunit c</fullName>
    </alternativeName>
    <alternativeName>
        <fullName evidence="1">F-type ATPase subunit c</fullName>
        <shortName evidence="1">F-ATPase subunit c</shortName>
    </alternativeName>
    <alternativeName>
        <fullName evidence="1">Lipid-binding protein</fullName>
    </alternativeName>
</protein>
<keyword id="KW-0066">ATP synthesis</keyword>
<keyword id="KW-1003">Cell membrane</keyword>
<keyword id="KW-0138">CF(0)</keyword>
<keyword id="KW-0375">Hydrogen ion transport</keyword>
<keyword id="KW-0406">Ion transport</keyword>
<keyword id="KW-0446">Lipid-binding</keyword>
<keyword id="KW-0472">Membrane</keyword>
<keyword id="KW-1185">Reference proteome</keyword>
<keyword id="KW-0812">Transmembrane</keyword>
<keyword id="KW-1133">Transmembrane helix</keyword>
<keyword id="KW-0813">Transport</keyword>
<organism>
    <name type="scientific">Clostridium novyi (strain NT)</name>
    <dbReference type="NCBI Taxonomy" id="386415"/>
    <lineage>
        <taxon>Bacteria</taxon>
        <taxon>Bacillati</taxon>
        <taxon>Bacillota</taxon>
        <taxon>Clostridia</taxon>
        <taxon>Eubacteriales</taxon>
        <taxon>Clostridiaceae</taxon>
        <taxon>Clostridium</taxon>
    </lineage>
</organism>
<gene>
    <name evidence="1" type="primary">atpE</name>
    <name type="ordered locus">NT01CX_0535</name>
</gene>
<sequence>MISSQAFVAGMCAIGAGLASIACIGGGIGTGNATAKAVEGVSRQPEASGKILSTMIIGSALSEATAIYGFLIAILLVLKIGNIG</sequence>
<evidence type="ECO:0000255" key="1">
    <source>
        <dbReference type="HAMAP-Rule" id="MF_01396"/>
    </source>
</evidence>
<reference key="1">
    <citation type="journal article" date="2006" name="Nat. Biotechnol.">
        <title>The genome and transcriptomes of the anti-tumor agent Clostridium novyi-NT.</title>
        <authorList>
            <person name="Bettegowda C."/>
            <person name="Huang X."/>
            <person name="Lin J."/>
            <person name="Cheong I."/>
            <person name="Kohli M."/>
            <person name="Szabo S.A."/>
            <person name="Zhang X."/>
            <person name="Diaz L.A. Jr."/>
            <person name="Velculescu V.E."/>
            <person name="Parmigiani G."/>
            <person name="Kinzler K.W."/>
            <person name="Vogelstein B."/>
            <person name="Zhou S."/>
        </authorList>
    </citation>
    <scope>NUCLEOTIDE SEQUENCE [LARGE SCALE GENOMIC DNA]</scope>
    <source>
        <strain>NT</strain>
    </source>
</reference>
<name>ATPL_CLONN</name>
<proteinExistence type="inferred from homology"/>
<comment type="function">
    <text evidence="1">F(1)F(0) ATP synthase produces ATP from ADP in the presence of a proton or sodium gradient. F-type ATPases consist of two structural domains, F(1) containing the extramembraneous catalytic core and F(0) containing the membrane proton channel, linked together by a central stalk and a peripheral stalk. During catalysis, ATP synthesis in the catalytic domain of F(1) is coupled via a rotary mechanism of the central stalk subunits to proton translocation.</text>
</comment>
<comment type="function">
    <text evidence="1">Key component of the F(0) channel; it plays a direct role in translocation across the membrane. A homomeric c-ring of between 10-14 subunits forms the central stalk rotor element with the F(1) delta and epsilon subunits.</text>
</comment>
<comment type="subunit">
    <text evidence="1">F-type ATPases have 2 components, F(1) - the catalytic core - and F(0) - the membrane proton channel. F(1) has five subunits: alpha(3), beta(3), gamma(1), delta(1), epsilon(1). F(0) has three main subunits: a(1), b(2) and c(10-14). The alpha and beta chains form an alternating ring which encloses part of the gamma chain. F(1) is attached to F(0) by a central stalk formed by the gamma and epsilon chains, while a peripheral stalk is formed by the delta and b chains.</text>
</comment>
<comment type="subcellular location">
    <subcellularLocation>
        <location evidence="1">Cell membrane</location>
        <topology evidence="1">Multi-pass membrane protein</topology>
    </subcellularLocation>
</comment>
<comment type="similarity">
    <text evidence="1">Belongs to the ATPase C chain family.</text>
</comment>
<accession>A0Q2Z9</accession>
<feature type="chain" id="PRO_0000365871" description="ATP synthase subunit c">
    <location>
        <begin position="1"/>
        <end position="84"/>
    </location>
</feature>
<feature type="transmembrane region" description="Helical" evidence="1">
    <location>
        <begin position="8"/>
        <end position="28"/>
    </location>
</feature>
<feature type="transmembrane region" description="Helical" evidence="1">
    <location>
        <begin position="56"/>
        <end position="76"/>
    </location>
</feature>
<feature type="site" description="Reversibly protonated during proton transport" evidence="1">
    <location>
        <position position="63"/>
    </location>
</feature>